<sequence>MTNTWNRLALLIFAVLSLLVAGELQAGVVVGGTRFIFPADRESISILLTNTSQESWLINSKINRPTRWAGGEASTVPAPLLAAPPLILLKPGTTGTLRLLRTESDILPVDRETLFELSIASVPSGKVENQSVKVAMRSVFKLFWRPEGLPGDPLEAYQQLRWTRNSQGVQLTNPTPYYINLIQVSVNGKALSNVGVVPPKSQRQTSWCQAIAPCHVAWRAINDYGGLSAKKEQNLP</sequence>
<name>YCBF_ECOLI</name>
<organism>
    <name type="scientific">Escherichia coli (strain K12)</name>
    <dbReference type="NCBI Taxonomy" id="83333"/>
    <lineage>
        <taxon>Bacteria</taxon>
        <taxon>Pseudomonadati</taxon>
        <taxon>Pseudomonadota</taxon>
        <taxon>Gammaproteobacteria</taxon>
        <taxon>Enterobacterales</taxon>
        <taxon>Enterobacteriaceae</taxon>
        <taxon>Escherichia</taxon>
    </lineage>
</organism>
<comment type="function">
    <text evidence="3">Part of the elfADCG-ycbUVF fimbrial operon, which promotes adhesion of bacteria to different abiotic surfaces. Could be required for the biogenesis of fimbriae.</text>
</comment>
<comment type="subcellular location">
    <subcellularLocation>
        <location evidence="1">Periplasm</location>
    </subcellularLocation>
</comment>
<comment type="induction">
    <text evidence="3">Expression is negatively regulated by H-NS and subjected to cAMP receptor protein (CRP)-mediated catabolite repression.</text>
</comment>
<comment type="miscellaneous">
    <text evidence="5">The operon is cryptic under classical laboratory conditions, but is functional when constitutively expressed.</text>
</comment>
<comment type="similarity">
    <text evidence="4">Belongs to the periplasmic pilus chaperone family.</text>
</comment>
<protein>
    <recommendedName>
        <fullName>Uncharacterized fimbrial chaperone YcbF</fullName>
    </recommendedName>
</protein>
<reference key="1">
    <citation type="journal article" date="1996" name="DNA Res.">
        <title>A 718-kb DNA sequence of the Escherichia coli K-12 genome corresponding to the 12.7-28.0 min region on the linkage map.</title>
        <authorList>
            <person name="Oshima T."/>
            <person name="Aiba H."/>
            <person name="Baba T."/>
            <person name="Fujita K."/>
            <person name="Hayashi K."/>
            <person name="Honjo A."/>
            <person name="Ikemoto K."/>
            <person name="Inada T."/>
            <person name="Itoh T."/>
            <person name="Kajihara M."/>
            <person name="Kanai K."/>
            <person name="Kashimoto K."/>
            <person name="Kimura S."/>
            <person name="Kitagawa M."/>
            <person name="Makino K."/>
            <person name="Masuda S."/>
            <person name="Miki T."/>
            <person name="Mizobuchi K."/>
            <person name="Mori H."/>
            <person name="Motomura K."/>
            <person name="Nakamura Y."/>
            <person name="Nashimoto H."/>
            <person name="Nishio Y."/>
            <person name="Saito N."/>
            <person name="Sampei G."/>
            <person name="Seki Y."/>
            <person name="Tagami H."/>
            <person name="Takemoto K."/>
            <person name="Wada C."/>
            <person name="Yamamoto Y."/>
            <person name="Yano M."/>
            <person name="Horiuchi T."/>
        </authorList>
    </citation>
    <scope>NUCLEOTIDE SEQUENCE [LARGE SCALE GENOMIC DNA]</scope>
    <source>
        <strain>K12 / W3110 / ATCC 27325 / DSM 5911</strain>
    </source>
</reference>
<reference key="2">
    <citation type="journal article" date="1997" name="Science">
        <title>The complete genome sequence of Escherichia coli K-12.</title>
        <authorList>
            <person name="Blattner F.R."/>
            <person name="Plunkett G. III"/>
            <person name="Bloch C.A."/>
            <person name="Perna N.T."/>
            <person name="Burland V."/>
            <person name="Riley M."/>
            <person name="Collado-Vides J."/>
            <person name="Glasner J.D."/>
            <person name="Rode C.K."/>
            <person name="Mayhew G.F."/>
            <person name="Gregor J."/>
            <person name="Davis N.W."/>
            <person name="Kirkpatrick H.A."/>
            <person name="Goeden M.A."/>
            <person name="Rose D.J."/>
            <person name="Mau B."/>
            <person name="Shao Y."/>
        </authorList>
    </citation>
    <scope>NUCLEOTIDE SEQUENCE [LARGE SCALE GENOMIC DNA]</scope>
    <source>
        <strain>K12 / MG1655 / ATCC 47076</strain>
    </source>
</reference>
<reference key="3">
    <citation type="journal article" date="2006" name="Mol. Syst. Biol.">
        <title>Highly accurate genome sequences of Escherichia coli K-12 strains MG1655 and W3110.</title>
        <authorList>
            <person name="Hayashi K."/>
            <person name="Morooka N."/>
            <person name="Yamamoto Y."/>
            <person name="Fujita K."/>
            <person name="Isono K."/>
            <person name="Choi S."/>
            <person name="Ohtsubo E."/>
            <person name="Baba T."/>
            <person name="Wanner B.L."/>
            <person name="Mori H."/>
            <person name="Horiuchi T."/>
        </authorList>
    </citation>
    <scope>NUCLEOTIDE SEQUENCE [LARGE SCALE GENOMIC DNA]</scope>
    <source>
        <strain>K12 / W3110 / ATCC 27325 / DSM 5911</strain>
    </source>
</reference>
<reference key="4">
    <citation type="journal article" date="1985" name="Eur. J. Biochem.">
        <title>Nucleotide sequence of the pyrD gene of Escherichia coli and characterization of the flavoprotein dihydroorotate dehydrogenase.</title>
        <authorList>
            <person name="Larsen N.J."/>
            <person name="Jensen K.F."/>
        </authorList>
    </citation>
    <scope>NUCLEOTIDE SEQUENCE [GENOMIC DNA] OF 165-236</scope>
</reference>
<reference key="5">
    <citation type="journal article" date="1994" name="Nucleic Acids Res.">
        <title>Intrinsic and extrinsic approaches for detecting genes in a bacterial genome.</title>
        <authorList>
            <person name="Borodovsky M."/>
            <person name="Rudd K.E."/>
            <person name="Koonin E.V."/>
        </authorList>
    </citation>
    <scope>IDENTIFICATION</scope>
</reference>
<reference key="6">
    <citation type="journal article" date="2010" name="Environ. Microbiol.">
        <title>Escherichia coli K-12 possesses multiple cryptic but functional chaperone-usher fimbriae with distinct surface specificities.</title>
        <authorList>
            <person name="Korea C.G."/>
            <person name="Badouraly R."/>
            <person name="Prevost M.C."/>
            <person name="Ghigo J.M."/>
            <person name="Beloin C."/>
        </authorList>
    </citation>
    <scope>FUNCTION</scope>
    <scope>INDUCTION</scope>
    <source>
        <strain>K12 / MG1655 / ATCC 47076</strain>
    </source>
</reference>
<dbReference type="EMBL" id="U00096">
    <property type="protein sequence ID" value="AAC74030.2"/>
    <property type="molecule type" value="Genomic_DNA"/>
</dbReference>
<dbReference type="EMBL" id="AP009048">
    <property type="protein sequence ID" value="BAA35699.2"/>
    <property type="molecule type" value="Genomic_DNA"/>
</dbReference>
<dbReference type="EMBL" id="X02826">
    <property type="status" value="NOT_ANNOTATED_CDS"/>
    <property type="molecule type" value="Genomic_DNA"/>
</dbReference>
<dbReference type="PIR" id="G64834">
    <property type="entry name" value="G64834"/>
</dbReference>
<dbReference type="RefSeq" id="NP_415464.4">
    <property type="nucleotide sequence ID" value="NC_000913.3"/>
</dbReference>
<dbReference type="SMR" id="P40876"/>
<dbReference type="BioGRID" id="4259443">
    <property type="interactions" value="9"/>
</dbReference>
<dbReference type="FunCoup" id="P40876">
    <property type="interactions" value="113"/>
</dbReference>
<dbReference type="STRING" id="511145.b0944"/>
<dbReference type="PaxDb" id="511145-b0944"/>
<dbReference type="EnsemblBacteria" id="AAC74030">
    <property type="protein sequence ID" value="AAC74030"/>
    <property type="gene ID" value="b0944"/>
</dbReference>
<dbReference type="GeneID" id="945559"/>
<dbReference type="KEGG" id="ecj:JW5124"/>
<dbReference type="KEGG" id="eco:b0944"/>
<dbReference type="KEGG" id="ecoc:C3026_05785"/>
<dbReference type="PATRIC" id="fig|511145.12.peg.978"/>
<dbReference type="EchoBASE" id="EB2298"/>
<dbReference type="eggNOG" id="COG3121">
    <property type="taxonomic scope" value="Bacteria"/>
</dbReference>
<dbReference type="HOGENOM" id="CLU_070768_2_2_6"/>
<dbReference type="InParanoid" id="P40876"/>
<dbReference type="OMA" id="GYCEINW"/>
<dbReference type="OrthoDB" id="6504604at2"/>
<dbReference type="PhylomeDB" id="P40876"/>
<dbReference type="BioCyc" id="EcoCyc:EG12397-MONOMER"/>
<dbReference type="PRO" id="PR:P40876"/>
<dbReference type="Proteomes" id="UP000000625">
    <property type="component" value="Chromosome"/>
</dbReference>
<dbReference type="GO" id="GO:0030288">
    <property type="term" value="C:outer membrane-bounded periplasmic space"/>
    <property type="evidence" value="ECO:0000318"/>
    <property type="project" value="GO_Central"/>
</dbReference>
<dbReference type="GO" id="GO:0044183">
    <property type="term" value="F:protein folding chaperone"/>
    <property type="evidence" value="ECO:0000318"/>
    <property type="project" value="GO_Central"/>
</dbReference>
<dbReference type="GO" id="GO:0071555">
    <property type="term" value="P:cell wall organization"/>
    <property type="evidence" value="ECO:0007669"/>
    <property type="project" value="InterPro"/>
</dbReference>
<dbReference type="GO" id="GO:0061077">
    <property type="term" value="P:chaperone-mediated protein folding"/>
    <property type="evidence" value="ECO:0000318"/>
    <property type="project" value="GO_Central"/>
</dbReference>
<dbReference type="Gene3D" id="2.60.40.10">
    <property type="entry name" value="Immunoglobulins"/>
    <property type="match status" value="2"/>
</dbReference>
<dbReference type="InterPro" id="IPR013783">
    <property type="entry name" value="Ig-like_fold"/>
</dbReference>
<dbReference type="InterPro" id="IPR008962">
    <property type="entry name" value="PapD-like_sf"/>
</dbReference>
<dbReference type="InterPro" id="IPR050643">
    <property type="entry name" value="Periplasmic_pilus_chap"/>
</dbReference>
<dbReference type="InterPro" id="IPR036316">
    <property type="entry name" value="Pili_assmbl_chap_C_dom_sf"/>
</dbReference>
<dbReference type="InterPro" id="IPR001829">
    <property type="entry name" value="Pili_assmbl_chaperone_bac"/>
</dbReference>
<dbReference type="InterPro" id="IPR016148">
    <property type="entry name" value="Pili_assmbl_chaperone_C"/>
</dbReference>
<dbReference type="InterPro" id="IPR018046">
    <property type="entry name" value="Pili_assmbl_chaperone_CS"/>
</dbReference>
<dbReference type="InterPro" id="IPR016147">
    <property type="entry name" value="Pili_assmbl_chaperone_N"/>
</dbReference>
<dbReference type="NCBIfam" id="NF008483">
    <property type="entry name" value="PRK11385.1"/>
    <property type="match status" value="1"/>
</dbReference>
<dbReference type="PANTHER" id="PTHR30251:SF1">
    <property type="entry name" value="FIMBRIAL CHAPARONE"/>
    <property type="match status" value="1"/>
</dbReference>
<dbReference type="PANTHER" id="PTHR30251">
    <property type="entry name" value="PILUS ASSEMBLY CHAPERONE"/>
    <property type="match status" value="1"/>
</dbReference>
<dbReference type="Pfam" id="PF02753">
    <property type="entry name" value="PapD_C"/>
    <property type="match status" value="1"/>
</dbReference>
<dbReference type="Pfam" id="PF00345">
    <property type="entry name" value="PapD_N"/>
    <property type="match status" value="1"/>
</dbReference>
<dbReference type="PRINTS" id="PR00969">
    <property type="entry name" value="CHAPERONPILI"/>
</dbReference>
<dbReference type="SUPFAM" id="SSF49354">
    <property type="entry name" value="PapD-like"/>
    <property type="match status" value="1"/>
</dbReference>
<dbReference type="SUPFAM" id="SSF49584">
    <property type="entry name" value="Periplasmic chaperone C-domain"/>
    <property type="match status" value="1"/>
</dbReference>
<dbReference type="PROSITE" id="PS00635">
    <property type="entry name" value="PILI_CHAPERONE"/>
    <property type="match status" value="1"/>
</dbReference>
<gene>
    <name type="primary">ycbF</name>
    <name type="ordered locus">b0944</name>
    <name type="ordered locus">JW5124</name>
</gene>
<accession>P40876</accession>
<accession>P75861</accession>
<keyword id="KW-0143">Chaperone</keyword>
<keyword id="KW-1029">Fimbrium biogenesis</keyword>
<keyword id="KW-0393">Immunoglobulin domain</keyword>
<keyword id="KW-0574">Periplasm</keyword>
<keyword id="KW-1185">Reference proteome</keyword>
<keyword id="KW-0732">Signal</keyword>
<evidence type="ECO:0000250" key="1"/>
<evidence type="ECO:0000255" key="2"/>
<evidence type="ECO:0000269" key="3">
    <source>
    </source>
</evidence>
<evidence type="ECO:0000305" key="4"/>
<evidence type="ECO:0000305" key="5">
    <source>
    </source>
</evidence>
<feature type="signal peptide" evidence="2">
    <location>
        <begin position="1"/>
        <end position="26"/>
    </location>
</feature>
<feature type="chain" id="PRO_0000009291" description="Uncharacterized fimbrial chaperone YcbF">
    <location>
        <begin position="27"/>
        <end position="236"/>
    </location>
</feature>
<proteinExistence type="evidence at transcript level"/>